<sequence length="247" mass="26495">MAGHSKWANTKHRKAAQDSKRGKIFTKIIRELVTAARLGGGDPGSNPRLRAAIDKALSNNMTRDTLNRAIARGVGGDDDTNMETIIYEGYGPGGTAVMVECLSDNRNRTVSEVRHAFTKTGGNLGTDGSVSYLFTKKGVISYAPGLDEDTVMNAALEAGADDVVTYDDGAIDVFTPWETFGDVKDALDAAGLKAESAEVSMIPSTKADMDAETAPKLMRLIDMLEDCDDVQEVYHNGEISDEVAELL</sequence>
<gene>
    <name type="ordered locus">ECA2494</name>
</gene>
<proteinExistence type="inferred from homology"/>
<feature type="chain" id="PRO_0000175810" description="Probable transcriptional regulatory protein ECA2494">
    <location>
        <begin position="1"/>
        <end position="247"/>
    </location>
</feature>
<protein>
    <recommendedName>
        <fullName evidence="1">Probable transcriptional regulatory protein ECA2494</fullName>
    </recommendedName>
</protein>
<accession>Q6D499</accession>
<comment type="subcellular location">
    <subcellularLocation>
        <location evidence="1">Cytoplasm</location>
    </subcellularLocation>
</comment>
<comment type="similarity">
    <text evidence="1">Belongs to the TACO1 family.</text>
</comment>
<name>Y2494_PECAS</name>
<evidence type="ECO:0000255" key="1">
    <source>
        <dbReference type="HAMAP-Rule" id="MF_00693"/>
    </source>
</evidence>
<organism>
    <name type="scientific">Pectobacterium atrosepticum (strain SCRI 1043 / ATCC BAA-672)</name>
    <name type="common">Erwinia carotovora subsp. atroseptica</name>
    <dbReference type="NCBI Taxonomy" id="218491"/>
    <lineage>
        <taxon>Bacteria</taxon>
        <taxon>Pseudomonadati</taxon>
        <taxon>Pseudomonadota</taxon>
        <taxon>Gammaproteobacteria</taxon>
        <taxon>Enterobacterales</taxon>
        <taxon>Pectobacteriaceae</taxon>
        <taxon>Pectobacterium</taxon>
    </lineage>
</organism>
<keyword id="KW-0963">Cytoplasm</keyword>
<keyword id="KW-0238">DNA-binding</keyword>
<keyword id="KW-1185">Reference proteome</keyword>
<keyword id="KW-0804">Transcription</keyword>
<keyword id="KW-0805">Transcription regulation</keyword>
<dbReference type="EMBL" id="BX950851">
    <property type="protein sequence ID" value="CAG75394.1"/>
    <property type="molecule type" value="Genomic_DNA"/>
</dbReference>
<dbReference type="RefSeq" id="WP_011094041.1">
    <property type="nucleotide sequence ID" value="NC_004547.2"/>
</dbReference>
<dbReference type="SMR" id="Q6D499"/>
<dbReference type="STRING" id="218491.ECA2494"/>
<dbReference type="KEGG" id="eca:ECA2494"/>
<dbReference type="PATRIC" id="fig|218491.5.peg.2524"/>
<dbReference type="eggNOG" id="COG0217">
    <property type="taxonomic scope" value="Bacteria"/>
</dbReference>
<dbReference type="HOGENOM" id="CLU_062974_2_2_6"/>
<dbReference type="OrthoDB" id="9781053at2"/>
<dbReference type="Proteomes" id="UP000007966">
    <property type="component" value="Chromosome"/>
</dbReference>
<dbReference type="GO" id="GO:0005829">
    <property type="term" value="C:cytosol"/>
    <property type="evidence" value="ECO:0007669"/>
    <property type="project" value="TreeGrafter"/>
</dbReference>
<dbReference type="GO" id="GO:0003677">
    <property type="term" value="F:DNA binding"/>
    <property type="evidence" value="ECO:0007669"/>
    <property type="project" value="UniProtKB-UniRule"/>
</dbReference>
<dbReference type="GO" id="GO:0006355">
    <property type="term" value="P:regulation of DNA-templated transcription"/>
    <property type="evidence" value="ECO:0007669"/>
    <property type="project" value="UniProtKB-UniRule"/>
</dbReference>
<dbReference type="FunFam" id="1.10.10.200:FF:000001">
    <property type="entry name" value="Probable transcriptional regulatory protein YebC"/>
    <property type="match status" value="1"/>
</dbReference>
<dbReference type="FunFam" id="3.30.70.980:FF:000002">
    <property type="entry name" value="Probable transcriptional regulatory protein YebC"/>
    <property type="match status" value="1"/>
</dbReference>
<dbReference type="Gene3D" id="1.10.10.200">
    <property type="match status" value="1"/>
</dbReference>
<dbReference type="Gene3D" id="3.30.70.980">
    <property type="match status" value="2"/>
</dbReference>
<dbReference type="HAMAP" id="MF_00693">
    <property type="entry name" value="Transcrip_reg_TACO1"/>
    <property type="match status" value="1"/>
</dbReference>
<dbReference type="InterPro" id="IPR017856">
    <property type="entry name" value="Integrase-like_N"/>
</dbReference>
<dbReference type="InterPro" id="IPR048300">
    <property type="entry name" value="TACO1_YebC-like_2nd/3rd_dom"/>
</dbReference>
<dbReference type="InterPro" id="IPR049083">
    <property type="entry name" value="TACO1_YebC_N"/>
</dbReference>
<dbReference type="InterPro" id="IPR002876">
    <property type="entry name" value="Transcrip_reg_TACO1-like"/>
</dbReference>
<dbReference type="InterPro" id="IPR026564">
    <property type="entry name" value="Transcrip_reg_TACO1-like_dom3"/>
</dbReference>
<dbReference type="InterPro" id="IPR029072">
    <property type="entry name" value="YebC-like"/>
</dbReference>
<dbReference type="NCBIfam" id="NF001030">
    <property type="entry name" value="PRK00110.1"/>
    <property type="match status" value="1"/>
</dbReference>
<dbReference type="NCBIfam" id="NF009044">
    <property type="entry name" value="PRK12378.1"/>
    <property type="match status" value="1"/>
</dbReference>
<dbReference type="NCBIfam" id="TIGR01033">
    <property type="entry name" value="YebC/PmpR family DNA-binding transcriptional regulator"/>
    <property type="match status" value="1"/>
</dbReference>
<dbReference type="PANTHER" id="PTHR12532:SF6">
    <property type="entry name" value="TRANSCRIPTIONAL REGULATORY PROTEIN YEBC-RELATED"/>
    <property type="match status" value="1"/>
</dbReference>
<dbReference type="PANTHER" id="PTHR12532">
    <property type="entry name" value="TRANSLATIONAL ACTIVATOR OF CYTOCHROME C OXIDASE 1"/>
    <property type="match status" value="1"/>
</dbReference>
<dbReference type="Pfam" id="PF20772">
    <property type="entry name" value="TACO1_YebC_N"/>
    <property type="match status" value="1"/>
</dbReference>
<dbReference type="Pfam" id="PF01709">
    <property type="entry name" value="Transcrip_reg"/>
    <property type="match status" value="1"/>
</dbReference>
<dbReference type="SUPFAM" id="SSF75625">
    <property type="entry name" value="YebC-like"/>
    <property type="match status" value="1"/>
</dbReference>
<reference key="1">
    <citation type="journal article" date="2004" name="Proc. Natl. Acad. Sci. U.S.A.">
        <title>Genome sequence of the enterobacterial phytopathogen Erwinia carotovora subsp. atroseptica and characterization of virulence factors.</title>
        <authorList>
            <person name="Bell K.S."/>
            <person name="Sebaihia M."/>
            <person name="Pritchard L."/>
            <person name="Holden M.T.G."/>
            <person name="Hyman L.J."/>
            <person name="Holeva M.C."/>
            <person name="Thomson N.R."/>
            <person name="Bentley S.D."/>
            <person name="Churcher L.J.C."/>
            <person name="Mungall K."/>
            <person name="Atkin R."/>
            <person name="Bason N."/>
            <person name="Brooks K."/>
            <person name="Chillingworth T."/>
            <person name="Clark K."/>
            <person name="Doggett J."/>
            <person name="Fraser A."/>
            <person name="Hance Z."/>
            <person name="Hauser H."/>
            <person name="Jagels K."/>
            <person name="Moule S."/>
            <person name="Norbertczak H."/>
            <person name="Ormond D."/>
            <person name="Price C."/>
            <person name="Quail M.A."/>
            <person name="Sanders M."/>
            <person name="Walker D."/>
            <person name="Whitehead S."/>
            <person name="Salmond G.P.C."/>
            <person name="Birch P.R.J."/>
            <person name="Parkhill J."/>
            <person name="Toth I.K."/>
        </authorList>
    </citation>
    <scope>NUCLEOTIDE SEQUENCE [LARGE SCALE GENOMIC DNA]</scope>
    <source>
        <strain>SCRI 1043 / ATCC BAA-672</strain>
    </source>
</reference>